<dbReference type="EMBL" id="CP001113">
    <property type="protein sequence ID" value="ACF63284.1"/>
    <property type="molecule type" value="Genomic_DNA"/>
</dbReference>
<dbReference type="RefSeq" id="WP_000256453.1">
    <property type="nucleotide sequence ID" value="NZ_CCMR01000001.1"/>
</dbReference>
<dbReference type="SMR" id="B4T2B5"/>
<dbReference type="KEGG" id="see:SNSL254_A2890"/>
<dbReference type="HOGENOM" id="CLU_100590_5_1_6"/>
<dbReference type="Proteomes" id="UP000008824">
    <property type="component" value="Chromosome"/>
</dbReference>
<dbReference type="GO" id="GO:0005737">
    <property type="term" value="C:cytoplasm"/>
    <property type="evidence" value="ECO:0007669"/>
    <property type="project" value="UniProtKB-ARBA"/>
</dbReference>
<dbReference type="GO" id="GO:0015935">
    <property type="term" value="C:small ribosomal subunit"/>
    <property type="evidence" value="ECO:0007669"/>
    <property type="project" value="TreeGrafter"/>
</dbReference>
<dbReference type="GO" id="GO:0003735">
    <property type="term" value="F:structural constituent of ribosome"/>
    <property type="evidence" value="ECO:0007669"/>
    <property type="project" value="InterPro"/>
</dbReference>
<dbReference type="GO" id="GO:0006412">
    <property type="term" value="P:translation"/>
    <property type="evidence" value="ECO:0007669"/>
    <property type="project" value="UniProtKB-UniRule"/>
</dbReference>
<dbReference type="FunFam" id="3.30.1320.10:FF:000001">
    <property type="entry name" value="30S ribosomal protein S16"/>
    <property type="match status" value="1"/>
</dbReference>
<dbReference type="Gene3D" id="3.30.1320.10">
    <property type="match status" value="1"/>
</dbReference>
<dbReference type="HAMAP" id="MF_00385">
    <property type="entry name" value="Ribosomal_bS16"/>
    <property type="match status" value="1"/>
</dbReference>
<dbReference type="InterPro" id="IPR000307">
    <property type="entry name" value="Ribosomal_bS16"/>
</dbReference>
<dbReference type="InterPro" id="IPR020592">
    <property type="entry name" value="Ribosomal_bS16_CS"/>
</dbReference>
<dbReference type="InterPro" id="IPR023803">
    <property type="entry name" value="Ribosomal_bS16_dom_sf"/>
</dbReference>
<dbReference type="NCBIfam" id="TIGR00002">
    <property type="entry name" value="S16"/>
    <property type="match status" value="1"/>
</dbReference>
<dbReference type="PANTHER" id="PTHR12919">
    <property type="entry name" value="30S RIBOSOMAL PROTEIN S16"/>
    <property type="match status" value="1"/>
</dbReference>
<dbReference type="PANTHER" id="PTHR12919:SF20">
    <property type="entry name" value="SMALL RIBOSOMAL SUBUNIT PROTEIN BS16M"/>
    <property type="match status" value="1"/>
</dbReference>
<dbReference type="Pfam" id="PF00886">
    <property type="entry name" value="Ribosomal_S16"/>
    <property type="match status" value="1"/>
</dbReference>
<dbReference type="SUPFAM" id="SSF54565">
    <property type="entry name" value="Ribosomal protein S16"/>
    <property type="match status" value="1"/>
</dbReference>
<dbReference type="PROSITE" id="PS00732">
    <property type="entry name" value="RIBOSOMAL_S16"/>
    <property type="match status" value="1"/>
</dbReference>
<gene>
    <name evidence="1" type="primary">rpsP</name>
    <name type="ordered locus">SNSL254_A2890</name>
</gene>
<evidence type="ECO:0000255" key="1">
    <source>
        <dbReference type="HAMAP-Rule" id="MF_00385"/>
    </source>
</evidence>
<evidence type="ECO:0000305" key="2"/>
<organism>
    <name type="scientific">Salmonella newport (strain SL254)</name>
    <dbReference type="NCBI Taxonomy" id="423368"/>
    <lineage>
        <taxon>Bacteria</taxon>
        <taxon>Pseudomonadati</taxon>
        <taxon>Pseudomonadota</taxon>
        <taxon>Gammaproteobacteria</taxon>
        <taxon>Enterobacterales</taxon>
        <taxon>Enterobacteriaceae</taxon>
        <taxon>Salmonella</taxon>
    </lineage>
</organism>
<comment type="similarity">
    <text evidence="1">Belongs to the bacterial ribosomal protein bS16 family.</text>
</comment>
<feature type="chain" id="PRO_1000196470" description="Small ribosomal subunit protein bS16">
    <location>
        <begin position="1"/>
        <end position="82"/>
    </location>
</feature>
<name>RS16_SALNS</name>
<accession>B4T2B5</accession>
<protein>
    <recommendedName>
        <fullName evidence="1">Small ribosomal subunit protein bS16</fullName>
    </recommendedName>
    <alternativeName>
        <fullName evidence="2">30S ribosomal protein S16</fullName>
    </alternativeName>
</protein>
<sequence>MVTIRLARHGAKKRPFYQVVVTDSRNARNGRFIERVGFFNPIASEKEEGTRLDLDRIAHWVGQGATISDRVAALIKEVKKAA</sequence>
<keyword id="KW-0687">Ribonucleoprotein</keyword>
<keyword id="KW-0689">Ribosomal protein</keyword>
<reference key="1">
    <citation type="journal article" date="2011" name="J. Bacteriol.">
        <title>Comparative genomics of 28 Salmonella enterica isolates: evidence for CRISPR-mediated adaptive sublineage evolution.</title>
        <authorList>
            <person name="Fricke W.F."/>
            <person name="Mammel M.K."/>
            <person name="McDermott P.F."/>
            <person name="Tartera C."/>
            <person name="White D.G."/>
            <person name="Leclerc J.E."/>
            <person name="Ravel J."/>
            <person name="Cebula T.A."/>
        </authorList>
    </citation>
    <scope>NUCLEOTIDE SEQUENCE [LARGE SCALE GENOMIC DNA]</scope>
    <source>
        <strain>SL254</strain>
    </source>
</reference>
<proteinExistence type="inferred from homology"/>